<dbReference type="EC" id="2.7.1.48" evidence="1"/>
<dbReference type="EMBL" id="CP000728">
    <property type="protein sequence ID" value="ABS42078.1"/>
    <property type="molecule type" value="Genomic_DNA"/>
</dbReference>
<dbReference type="RefSeq" id="WP_012100451.1">
    <property type="nucleotide sequence ID" value="NC_009699.1"/>
</dbReference>
<dbReference type="SMR" id="A7GGE1"/>
<dbReference type="KEGG" id="cbf:CLI_2617"/>
<dbReference type="HOGENOM" id="CLU_021278_1_2_9"/>
<dbReference type="UniPathway" id="UPA00574">
    <property type="reaction ID" value="UER00637"/>
</dbReference>
<dbReference type="UniPathway" id="UPA00579">
    <property type="reaction ID" value="UER00640"/>
</dbReference>
<dbReference type="Proteomes" id="UP000002410">
    <property type="component" value="Chromosome"/>
</dbReference>
<dbReference type="GO" id="GO:0005737">
    <property type="term" value="C:cytoplasm"/>
    <property type="evidence" value="ECO:0007669"/>
    <property type="project" value="UniProtKB-SubCell"/>
</dbReference>
<dbReference type="GO" id="GO:0005524">
    <property type="term" value="F:ATP binding"/>
    <property type="evidence" value="ECO:0007669"/>
    <property type="project" value="UniProtKB-UniRule"/>
</dbReference>
<dbReference type="GO" id="GO:0043771">
    <property type="term" value="F:cytidine kinase activity"/>
    <property type="evidence" value="ECO:0007669"/>
    <property type="project" value="RHEA"/>
</dbReference>
<dbReference type="GO" id="GO:0004849">
    <property type="term" value="F:uridine kinase activity"/>
    <property type="evidence" value="ECO:0007669"/>
    <property type="project" value="UniProtKB-UniRule"/>
</dbReference>
<dbReference type="GO" id="GO:0044211">
    <property type="term" value="P:CTP salvage"/>
    <property type="evidence" value="ECO:0007669"/>
    <property type="project" value="UniProtKB-UniRule"/>
</dbReference>
<dbReference type="GO" id="GO:0044206">
    <property type="term" value="P:UMP salvage"/>
    <property type="evidence" value="ECO:0007669"/>
    <property type="project" value="UniProtKB-UniRule"/>
</dbReference>
<dbReference type="CDD" id="cd02023">
    <property type="entry name" value="UMPK"/>
    <property type="match status" value="1"/>
</dbReference>
<dbReference type="Gene3D" id="3.40.50.300">
    <property type="entry name" value="P-loop containing nucleotide triphosphate hydrolases"/>
    <property type="match status" value="1"/>
</dbReference>
<dbReference type="HAMAP" id="MF_00551">
    <property type="entry name" value="Uridine_kinase"/>
    <property type="match status" value="1"/>
</dbReference>
<dbReference type="InterPro" id="IPR027417">
    <property type="entry name" value="P-loop_NTPase"/>
</dbReference>
<dbReference type="InterPro" id="IPR006083">
    <property type="entry name" value="PRK/URK"/>
</dbReference>
<dbReference type="InterPro" id="IPR026008">
    <property type="entry name" value="Uridine_kinase"/>
</dbReference>
<dbReference type="InterPro" id="IPR000764">
    <property type="entry name" value="Uridine_kinase-like"/>
</dbReference>
<dbReference type="NCBIfam" id="NF004018">
    <property type="entry name" value="PRK05480.1"/>
    <property type="match status" value="1"/>
</dbReference>
<dbReference type="NCBIfam" id="TIGR00235">
    <property type="entry name" value="udk"/>
    <property type="match status" value="1"/>
</dbReference>
<dbReference type="PANTHER" id="PTHR10285">
    <property type="entry name" value="URIDINE KINASE"/>
    <property type="match status" value="1"/>
</dbReference>
<dbReference type="Pfam" id="PF00485">
    <property type="entry name" value="PRK"/>
    <property type="match status" value="1"/>
</dbReference>
<dbReference type="PRINTS" id="PR00988">
    <property type="entry name" value="URIDINKINASE"/>
</dbReference>
<dbReference type="SUPFAM" id="SSF52540">
    <property type="entry name" value="P-loop containing nucleoside triphosphate hydrolases"/>
    <property type="match status" value="1"/>
</dbReference>
<name>URK_CLOBL</name>
<sequence>MKRPVLIGITGGTGSGKSTVAKEIYNKFDEACIAMIEQDSYYKDQSSIPFEERCKKNYDHPDAFDNELLIDHLKNLVDLNVIEKPIYDFEAHNRKEETIKVEPRDIIILEGILVLQDPKVRELLDIKIYVDTDADVRIIRRLLRDINERGRTVDSVINQYLTVVRPMHMQFIEPSKRYADIIIPEGGHNRVAVDMMVANIKHLLQK</sequence>
<organism>
    <name type="scientific">Clostridium botulinum (strain Langeland / NCTC 10281 / Type F)</name>
    <dbReference type="NCBI Taxonomy" id="441772"/>
    <lineage>
        <taxon>Bacteria</taxon>
        <taxon>Bacillati</taxon>
        <taxon>Bacillota</taxon>
        <taxon>Clostridia</taxon>
        <taxon>Eubacteriales</taxon>
        <taxon>Clostridiaceae</taxon>
        <taxon>Clostridium</taxon>
    </lineage>
</organism>
<reference key="1">
    <citation type="submission" date="2007-06" db="EMBL/GenBank/DDBJ databases">
        <authorList>
            <person name="Brinkac L.M."/>
            <person name="Daugherty S."/>
            <person name="Dodson R.J."/>
            <person name="Madupu R."/>
            <person name="Brown J.L."/>
            <person name="Bruce D."/>
            <person name="Detter C."/>
            <person name="Munk C."/>
            <person name="Smith L.A."/>
            <person name="Smith T.J."/>
            <person name="White O."/>
            <person name="Brettin T.S."/>
        </authorList>
    </citation>
    <scope>NUCLEOTIDE SEQUENCE [LARGE SCALE GENOMIC DNA]</scope>
    <source>
        <strain>Langeland / NCTC 10281 / Type F</strain>
    </source>
</reference>
<proteinExistence type="inferred from homology"/>
<feature type="chain" id="PRO_1000017870" description="Uridine kinase">
    <location>
        <begin position="1"/>
        <end position="206"/>
    </location>
</feature>
<feature type="binding site" evidence="1">
    <location>
        <begin position="11"/>
        <end position="18"/>
    </location>
    <ligand>
        <name>ATP</name>
        <dbReference type="ChEBI" id="CHEBI:30616"/>
    </ligand>
</feature>
<gene>
    <name evidence="1" type="primary">udk</name>
    <name type="ordered locus">CLI_2617</name>
</gene>
<evidence type="ECO:0000255" key="1">
    <source>
        <dbReference type="HAMAP-Rule" id="MF_00551"/>
    </source>
</evidence>
<accession>A7GGE1</accession>
<comment type="catalytic activity">
    <reaction evidence="1">
        <text>uridine + ATP = UMP + ADP + H(+)</text>
        <dbReference type="Rhea" id="RHEA:16825"/>
        <dbReference type="ChEBI" id="CHEBI:15378"/>
        <dbReference type="ChEBI" id="CHEBI:16704"/>
        <dbReference type="ChEBI" id="CHEBI:30616"/>
        <dbReference type="ChEBI" id="CHEBI:57865"/>
        <dbReference type="ChEBI" id="CHEBI:456216"/>
        <dbReference type="EC" id="2.7.1.48"/>
    </reaction>
</comment>
<comment type="catalytic activity">
    <reaction evidence="1">
        <text>cytidine + ATP = CMP + ADP + H(+)</text>
        <dbReference type="Rhea" id="RHEA:24674"/>
        <dbReference type="ChEBI" id="CHEBI:15378"/>
        <dbReference type="ChEBI" id="CHEBI:17562"/>
        <dbReference type="ChEBI" id="CHEBI:30616"/>
        <dbReference type="ChEBI" id="CHEBI:60377"/>
        <dbReference type="ChEBI" id="CHEBI:456216"/>
        <dbReference type="EC" id="2.7.1.48"/>
    </reaction>
</comment>
<comment type="pathway">
    <text evidence="1">Pyrimidine metabolism; CTP biosynthesis via salvage pathway; CTP from cytidine: step 1/3.</text>
</comment>
<comment type="pathway">
    <text evidence="1">Pyrimidine metabolism; UMP biosynthesis via salvage pathway; UMP from uridine: step 1/1.</text>
</comment>
<comment type="subcellular location">
    <subcellularLocation>
        <location evidence="1">Cytoplasm</location>
    </subcellularLocation>
</comment>
<comment type="similarity">
    <text evidence="1">Belongs to the uridine kinase family.</text>
</comment>
<protein>
    <recommendedName>
        <fullName evidence="1">Uridine kinase</fullName>
        <ecNumber evidence="1">2.7.1.48</ecNumber>
    </recommendedName>
    <alternativeName>
        <fullName evidence="1">Cytidine monophosphokinase</fullName>
    </alternativeName>
    <alternativeName>
        <fullName evidence="1">Uridine monophosphokinase</fullName>
    </alternativeName>
</protein>
<keyword id="KW-0067">ATP-binding</keyword>
<keyword id="KW-0963">Cytoplasm</keyword>
<keyword id="KW-0418">Kinase</keyword>
<keyword id="KW-0547">Nucleotide-binding</keyword>
<keyword id="KW-0808">Transferase</keyword>